<keyword id="KW-0238">DNA-binding</keyword>
<keyword id="KW-0479">Metal-binding</keyword>
<keyword id="KW-0539">Nucleus</keyword>
<keyword id="KW-1185">Reference proteome</keyword>
<keyword id="KW-0677">Repeat</keyword>
<keyword id="KW-0862">Zinc</keyword>
<keyword id="KW-0863">Zinc-finger</keyword>
<feature type="chain" id="PRO_0000046867" description="Zinc finger protein C25B8.19c">
    <location>
        <begin position="1"/>
        <end position="522"/>
    </location>
</feature>
<feature type="zinc finger region" description="C2H2-type 1" evidence="1">
    <location>
        <begin position="468"/>
        <end position="495"/>
    </location>
</feature>
<feature type="zinc finger region" description="C2H2-type 2" evidence="1">
    <location>
        <begin position="496"/>
        <end position="522"/>
    </location>
</feature>
<feature type="region of interest" description="Disordered" evidence="2">
    <location>
        <begin position="1"/>
        <end position="25"/>
    </location>
</feature>
<feature type="region of interest" description="Disordered" evidence="2">
    <location>
        <begin position="61"/>
        <end position="96"/>
    </location>
</feature>
<feature type="region of interest" description="Disordered" evidence="2">
    <location>
        <begin position="235"/>
        <end position="265"/>
    </location>
</feature>
<feature type="region of interest" description="Disordered" evidence="2">
    <location>
        <begin position="311"/>
        <end position="386"/>
    </location>
</feature>
<feature type="region of interest" description="Disordered" evidence="2">
    <location>
        <begin position="413"/>
        <end position="462"/>
    </location>
</feature>
<feature type="compositionally biased region" description="Low complexity" evidence="2">
    <location>
        <begin position="84"/>
        <end position="96"/>
    </location>
</feature>
<feature type="compositionally biased region" description="Polar residues" evidence="2">
    <location>
        <begin position="311"/>
        <end position="321"/>
    </location>
</feature>
<feature type="compositionally biased region" description="Polar residues" evidence="2">
    <location>
        <begin position="335"/>
        <end position="344"/>
    </location>
</feature>
<feature type="compositionally biased region" description="Low complexity" evidence="2">
    <location>
        <begin position="345"/>
        <end position="362"/>
    </location>
</feature>
<feature type="compositionally biased region" description="Polar residues" evidence="2">
    <location>
        <begin position="413"/>
        <end position="427"/>
    </location>
</feature>
<feature type="compositionally biased region" description="Basic and acidic residues" evidence="2">
    <location>
        <begin position="428"/>
        <end position="438"/>
    </location>
</feature>
<feature type="compositionally biased region" description="Low complexity" evidence="2">
    <location>
        <begin position="453"/>
        <end position="462"/>
    </location>
</feature>
<accession>Q9UTA1</accession>
<accession>Q9HFF3</accession>
<reference key="1">
    <citation type="journal article" date="2002" name="Nature">
        <title>The genome sequence of Schizosaccharomyces pombe.</title>
        <authorList>
            <person name="Wood V."/>
            <person name="Gwilliam R."/>
            <person name="Rajandream M.A."/>
            <person name="Lyne M.H."/>
            <person name="Lyne R."/>
            <person name="Stewart A."/>
            <person name="Sgouros J.G."/>
            <person name="Peat N."/>
            <person name="Hayles J."/>
            <person name="Baker S.G."/>
            <person name="Basham D."/>
            <person name="Bowman S."/>
            <person name="Brooks K."/>
            <person name="Brown D."/>
            <person name="Brown S."/>
            <person name="Chillingworth T."/>
            <person name="Churcher C.M."/>
            <person name="Collins M."/>
            <person name="Connor R."/>
            <person name="Cronin A."/>
            <person name="Davis P."/>
            <person name="Feltwell T."/>
            <person name="Fraser A."/>
            <person name="Gentles S."/>
            <person name="Goble A."/>
            <person name="Hamlin N."/>
            <person name="Harris D.E."/>
            <person name="Hidalgo J."/>
            <person name="Hodgson G."/>
            <person name="Holroyd S."/>
            <person name="Hornsby T."/>
            <person name="Howarth S."/>
            <person name="Huckle E.J."/>
            <person name="Hunt S."/>
            <person name="Jagels K."/>
            <person name="James K.D."/>
            <person name="Jones L."/>
            <person name="Jones M."/>
            <person name="Leather S."/>
            <person name="McDonald S."/>
            <person name="McLean J."/>
            <person name="Mooney P."/>
            <person name="Moule S."/>
            <person name="Mungall K.L."/>
            <person name="Murphy L.D."/>
            <person name="Niblett D."/>
            <person name="Odell C."/>
            <person name="Oliver K."/>
            <person name="O'Neil S."/>
            <person name="Pearson D."/>
            <person name="Quail M.A."/>
            <person name="Rabbinowitsch E."/>
            <person name="Rutherford K.M."/>
            <person name="Rutter S."/>
            <person name="Saunders D."/>
            <person name="Seeger K."/>
            <person name="Sharp S."/>
            <person name="Skelton J."/>
            <person name="Simmonds M.N."/>
            <person name="Squares R."/>
            <person name="Squares S."/>
            <person name="Stevens K."/>
            <person name="Taylor K."/>
            <person name="Taylor R.G."/>
            <person name="Tivey A."/>
            <person name="Walsh S.V."/>
            <person name="Warren T."/>
            <person name="Whitehead S."/>
            <person name="Woodward J.R."/>
            <person name="Volckaert G."/>
            <person name="Aert R."/>
            <person name="Robben J."/>
            <person name="Grymonprez B."/>
            <person name="Weltjens I."/>
            <person name="Vanstreels E."/>
            <person name="Rieger M."/>
            <person name="Schaefer M."/>
            <person name="Mueller-Auer S."/>
            <person name="Gabel C."/>
            <person name="Fuchs M."/>
            <person name="Duesterhoeft A."/>
            <person name="Fritzc C."/>
            <person name="Holzer E."/>
            <person name="Moestl D."/>
            <person name="Hilbert H."/>
            <person name="Borzym K."/>
            <person name="Langer I."/>
            <person name="Beck A."/>
            <person name="Lehrach H."/>
            <person name="Reinhardt R."/>
            <person name="Pohl T.M."/>
            <person name="Eger P."/>
            <person name="Zimmermann W."/>
            <person name="Wedler H."/>
            <person name="Wambutt R."/>
            <person name="Purnelle B."/>
            <person name="Goffeau A."/>
            <person name="Cadieu E."/>
            <person name="Dreano S."/>
            <person name="Gloux S."/>
            <person name="Lelaure V."/>
            <person name="Mottier S."/>
            <person name="Galibert F."/>
            <person name="Aves S.J."/>
            <person name="Xiang Z."/>
            <person name="Hunt C."/>
            <person name="Moore K."/>
            <person name="Hurst S.M."/>
            <person name="Lucas M."/>
            <person name="Rochet M."/>
            <person name="Gaillardin C."/>
            <person name="Tallada V.A."/>
            <person name="Garzon A."/>
            <person name="Thode G."/>
            <person name="Daga R.R."/>
            <person name="Cruzado L."/>
            <person name="Jimenez J."/>
            <person name="Sanchez M."/>
            <person name="del Rey F."/>
            <person name="Benito J."/>
            <person name="Dominguez A."/>
            <person name="Revuelta J.L."/>
            <person name="Moreno S."/>
            <person name="Armstrong J."/>
            <person name="Forsburg S.L."/>
            <person name="Cerutti L."/>
            <person name="Lowe T."/>
            <person name="McCombie W.R."/>
            <person name="Paulsen I."/>
            <person name="Potashkin J."/>
            <person name="Shpakovski G.V."/>
            <person name="Ussery D."/>
            <person name="Barrell B.G."/>
            <person name="Nurse P."/>
        </authorList>
    </citation>
    <scope>NUCLEOTIDE SEQUENCE [LARGE SCALE GENOMIC DNA]</scope>
    <source>
        <strain>972 / ATCC 24843</strain>
    </source>
</reference>
<evidence type="ECO:0000255" key="1">
    <source>
        <dbReference type="PROSITE-ProRule" id="PRU00042"/>
    </source>
</evidence>
<evidence type="ECO:0000256" key="2">
    <source>
        <dbReference type="SAM" id="MobiDB-lite"/>
    </source>
</evidence>
<evidence type="ECO:0000305" key="3"/>
<sequence>MSSDNTPSINRRNNENPPQSSLPTTSGIVYNMFPACPYPHVQNPAFHGSVDVPQVAQKAFDPQAATVSESANVSRPTPAPVPPAGNTNTPTTSNSNQNLENNVTSAASMPAILNAAGQLEFSPSTNNALCCCTTVHGHPHMPPNLLAASSARLRLPPISTILGGTFADPTFLAAAAAAAVPHYAHATTGSATDASNTSNGNSNPAAVPAGFLSGYSPLSYAYFVAKANELALANQRQSSEAAEQPSSKNNTSGANPPSSNNQEVTSAPIPAAPIVLPFQQPFYPIVCPGCAQGALPQHIPVPHNTEFAQYQPSSRDLQNHPTVDESRLSSVAPPASNTLNHANGNQAENASESSTSQSNDSQGPANTSYPVSVPLPNDAENNHTLSRNPYIPSLNFKDNMSAELSVVATLASNSAQAHPMGQQSDSNYSDHHNNDKRAHVSRRHSTSRKIAQSHTGSSSTSSAANVRYRCTECLQGFSRPSSLKIHTYSHTGERPFVCDYAGCGKAFNVRSNMRRHQRIHGL</sequence>
<comment type="subcellular location">
    <subcellularLocation>
        <location evidence="3">Nucleus</location>
    </subcellularLocation>
</comment>
<protein>
    <recommendedName>
        <fullName>Zinc finger protein C25B8.19c</fullName>
    </recommendedName>
</protein>
<dbReference type="EMBL" id="CU329670">
    <property type="protein sequence ID" value="CAB61785.2"/>
    <property type="molecule type" value="Genomic_DNA"/>
</dbReference>
<dbReference type="PIR" id="T50206">
    <property type="entry name" value="T50206"/>
</dbReference>
<dbReference type="RefSeq" id="NP_594479.2">
    <property type="nucleotide sequence ID" value="NM_001019908.2"/>
</dbReference>
<dbReference type="SMR" id="Q9UTA1"/>
<dbReference type="BioGRID" id="279188">
    <property type="interactions" value="2"/>
</dbReference>
<dbReference type="STRING" id="284812.Q9UTA1"/>
<dbReference type="iPTMnet" id="Q9UTA1"/>
<dbReference type="PaxDb" id="4896-SPAC25B8.19c.1"/>
<dbReference type="EnsemblFungi" id="SPAC25B8.19c.1">
    <property type="protein sequence ID" value="SPAC25B8.19c.1:pep"/>
    <property type="gene ID" value="SPAC25B8.19c"/>
</dbReference>
<dbReference type="GeneID" id="2542738"/>
<dbReference type="KEGG" id="spo:2542738"/>
<dbReference type="PomBase" id="SPAC25B8.19c"/>
<dbReference type="VEuPathDB" id="FungiDB:SPAC25B8.19c"/>
<dbReference type="eggNOG" id="KOG1721">
    <property type="taxonomic scope" value="Eukaryota"/>
</dbReference>
<dbReference type="HOGENOM" id="CLU_560383_0_0_1"/>
<dbReference type="InParanoid" id="Q9UTA1"/>
<dbReference type="OMA" id="TECLQGF"/>
<dbReference type="PRO" id="PR:Q9UTA1"/>
<dbReference type="Proteomes" id="UP000002485">
    <property type="component" value="Chromosome I"/>
</dbReference>
<dbReference type="GO" id="GO:0005634">
    <property type="term" value="C:nucleus"/>
    <property type="evidence" value="ECO:0000314"/>
    <property type="project" value="PomBase"/>
</dbReference>
<dbReference type="GO" id="GO:0001227">
    <property type="term" value="F:DNA-binding transcription repressor activity, RNA polymerase II-specific"/>
    <property type="evidence" value="ECO:0000314"/>
    <property type="project" value="PomBase"/>
</dbReference>
<dbReference type="GO" id="GO:0000978">
    <property type="term" value="F:RNA polymerase II cis-regulatory region sequence-specific DNA binding"/>
    <property type="evidence" value="ECO:0000314"/>
    <property type="project" value="PomBase"/>
</dbReference>
<dbReference type="GO" id="GO:0043565">
    <property type="term" value="F:sequence-specific DNA binding"/>
    <property type="evidence" value="ECO:0000314"/>
    <property type="project" value="PomBase"/>
</dbReference>
<dbReference type="GO" id="GO:0008270">
    <property type="term" value="F:zinc ion binding"/>
    <property type="evidence" value="ECO:0007669"/>
    <property type="project" value="UniProtKB-KW"/>
</dbReference>
<dbReference type="GO" id="GO:0006882">
    <property type="term" value="P:intracellular zinc ion homeostasis"/>
    <property type="evidence" value="ECO:0000315"/>
    <property type="project" value="PomBase"/>
</dbReference>
<dbReference type="GO" id="GO:0000122">
    <property type="term" value="P:negative regulation of transcription by RNA polymerase II"/>
    <property type="evidence" value="ECO:0000315"/>
    <property type="project" value="PomBase"/>
</dbReference>
<dbReference type="FunFam" id="3.30.160.60:FF:000125">
    <property type="entry name" value="Putative zinc finger protein 143"/>
    <property type="match status" value="1"/>
</dbReference>
<dbReference type="Gene3D" id="3.30.160.60">
    <property type="entry name" value="Classic Zinc Finger"/>
    <property type="match status" value="2"/>
</dbReference>
<dbReference type="InterPro" id="IPR036236">
    <property type="entry name" value="Znf_C2H2_sf"/>
</dbReference>
<dbReference type="InterPro" id="IPR013087">
    <property type="entry name" value="Znf_C2H2_type"/>
</dbReference>
<dbReference type="PANTHER" id="PTHR14003:SF20">
    <property type="entry name" value="FINGER DOMAIN PROTEIN, PUTATIVE (AFU_ORTHOLOGUE AFUA_4G10380)-RELATED"/>
    <property type="match status" value="1"/>
</dbReference>
<dbReference type="PANTHER" id="PTHR14003">
    <property type="entry name" value="TRANSCRIPTIONAL REPRESSOR PROTEIN YY"/>
    <property type="match status" value="1"/>
</dbReference>
<dbReference type="Pfam" id="PF00096">
    <property type="entry name" value="zf-C2H2"/>
    <property type="match status" value="2"/>
</dbReference>
<dbReference type="SMART" id="SM00355">
    <property type="entry name" value="ZnF_C2H2"/>
    <property type="match status" value="2"/>
</dbReference>
<dbReference type="SUPFAM" id="SSF57667">
    <property type="entry name" value="beta-beta-alpha zinc fingers"/>
    <property type="match status" value="1"/>
</dbReference>
<dbReference type="PROSITE" id="PS00028">
    <property type="entry name" value="ZINC_FINGER_C2H2_1"/>
    <property type="match status" value="2"/>
</dbReference>
<dbReference type="PROSITE" id="PS50157">
    <property type="entry name" value="ZINC_FINGER_C2H2_2"/>
    <property type="match status" value="2"/>
</dbReference>
<organism>
    <name type="scientific">Schizosaccharomyces pombe (strain 972 / ATCC 24843)</name>
    <name type="common">Fission yeast</name>
    <dbReference type="NCBI Taxonomy" id="284812"/>
    <lineage>
        <taxon>Eukaryota</taxon>
        <taxon>Fungi</taxon>
        <taxon>Dikarya</taxon>
        <taxon>Ascomycota</taxon>
        <taxon>Taphrinomycotina</taxon>
        <taxon>Schizosaccharomycetes</taxon>
        <taxon>Schizosaccharomycetales</taxon>
        <taxon>Schizosaccharomycetaceae</taxon>
        <taxon>Schizosaccharomyces</taxon>
    </lineage>
</organism>
<proteinExistence type="predicted"/>
<gene>
    <name type="ORF">SPAC25B8.19c</name>
    <name type="ORF">SPAC683.01c</name>
</gene>
<name>YL8J_SCHPO</name>